<proteinExistence type="inferred from homology"/>
<comment type="cofactor">
    <cofactor evidence="1">
        <name>heme</name>
        <dbReference type="ChEBI" id="CHEBI:30413"/>
    </cofactor>
</comment>
<comment type="subcellular location">
    <subcellularLocation>
        <location evidence="3">Membrane</location>
        <topology evidence="3">Single-pass membrane protein</topology>
    </subcellularLocation>
</comment>
<comment type="similarity">
    <text evidence="3">Belongs to the cytochrome P450 family.</text>
</comment>
<sequence length="502" mass="57204">MAISLLCLFLITFVSLTIVGCKIKRSIWNLPPSPPKLPVIGNLHQVGELPHRSFRRLAERTGHVMLLHLGFVPVTVISSREAAEEVLRTHDLDCCSRPNLVGSRLISRGFKDLNFTPYGEEWKERRRFLVGELFCSKKLQSFIYIKEVECNFLVKKLSESAVDQSPVDLSKTLFWLAASILFRVAFGQSFHESEFTDTDKIDELVFETETAQGSFTCSDFFPIAGLGWLVDWISGQHKRLNDVFLKLDALLQHVIDDHSNPGRSKDHKDIVDVMLDVMHKQGKDDSLRLTIDHIKGLLTNIIIAGIDTGALTMIWTMTELARNPEIMKKVQGEIRDRLGNNRERITKEDLDKVPFLNLVIKETFRLHPVAPLLLPRETMAHVKVQGYDIPPKRRILVNAWAIGRDPKLWTDPEEFKPERFIDSPVDYRGQHFELLPFGSGRRICPGMAMGMATLELGLLNLLYFFDWKLPDGMSHKDIDTEEAGTLTVVKKVHLKLVPVRVP</sequence>
<dbReference type="EC" id="1.14.-.-"/>
<dbReference type="EMBL" id="AB024038">
    <property type="protein sequence ID" value="BAB02436.1"/>
    <property type="molecule type" value="Genomic_DNA"/>
</dbReference>
<dbReference type="EMBL" id="CP002686">
    <property type="protein sequence ID" value="AEE77128.1"/>
    <property type="molecule type" value="Genomic_DNA"/>
</dbReference>
<dbReference type="RefSeq" id="NP_189247.1">
    <property type="nucleotide sequence ID" value="NM_113523.1"/>
</dbReference>
<dbReference type="SMR" id="Q9LTM6"/>
<dbReference type="FunCoup" id="Q9LTM6">
    <property type="interactions" value="233"/>
</dbReference>
<dbReference type="STRING" id="3702.Q9LTM6"/>
<dbReference type="iPTMnet" id="Q9LTM6"/>
<dbReference type="PaxDb" id="3702-AT3G26160.1"/>
<dbReference type="EnsemblPlants" id="AT3G26160.1">
    <property type="protein sequence ID" value="AT3G26160.1"/>
    <property type="gene ID" value="AT3G26160"/>
</dbReference>
<dbReference type="GeneID" id="822216"/>
<dbReference type="Gramene" id="AT3G26160.1">
    <property type="protein sequence ID" value="AT3G26160.1"/>
    <property type="gene ID" value="AT3G26160"/>
</dbReference>
<dbReference type="KEGG" id="ath:AT3G26160"/>
<dbReference type="Araport" id="AT3G26160"/>
<dbReference type="TAIR" id="AT3G26160">
    <property type="gene designation" value="CYP71B17"/>
</dbReference>
<dbReference type="eggNOG" id="KOG0156">
    <property type="taxonomic scope" value="Eukaryota"/>
</dbReference>
<dbReference type="HOGENOM" id="CLU_001570_4_1_1"/>
<dbReference type="InParanoid" id="Q9LTM6"/>
<dbReference type="OMA" id="HVIDDHS"/>
<dbReference type="PhylomeDB" id="Q9LTM6"/>
<dbReference type="BioCyc" id="ARA:AT3G26160-MONOMER"/>
<dbReference type="PRO" id="PR:Q9LTM6"/>
<dbReference type="Proteomes" id="UP000006548">
    <property type="component" value="Chromosome 3"/>
</dbReference>
<dbReference type="ExpressionAtlas" id="Q9LTM6">
    <property type="expression patterns" value="baseline and differential"/>
</dbReference>
<dbReference type="GO" id="GO:0016020">
    <property type="term" value="C:membrane"/>
    <property type="evidence" value="ECO:0007669"/>
    <property type="project" value="UniProtKB-SubCell"/>
</dbReference>
<dbReference type="GO" id="GO:0020037">
    <property type="term" value="F:heme binding"/>
    <property type="evidence" value="ECO:0007669"/>
    <property type="project" value="InterPro"/>
</dbReference>
<dbReference type="GO" id="GO:0005506">
    <property type="term" value="F:iron ion binding"/>
    <property type="evidence" value="ECO:0007669"/>
    <property type="project" value="InterPro"/>
</dbReference>
<dbReference type="GO" id="GO:0004497">
    <property type="term" value="F:monooxygenase activity"/>
    <property type="evidence" value="ECO:0007669"/>
    <property type="project" value="UniProtKB-KW"/>
</dbReference>
<dbReference type="GO" id="GO:0016705">
    <property type="term" value="F:oxidoreductase activity, acting on paired donors, with incorporation or reduction of molecular oxygen"/>
    <property type="evidence" value="ECO:0007669"/>
    <property type="project" value="InterPro"/>
</dbReference>
<dbReference type="CDD" id="cd11072">
    <property type="entry name" value="CYP71-like"/>
    <property type="match status" value="1"/>
</dbReference>
<dbReference type="FunFam" id="1.10.630.10:FF:000011">
    <property type="entry name" value="Cytochrome P450 83B1"/>
    <property type="match status" value="1"/>
</dbReference>
<dbReference type="Gene3D" id="1.10.630.10">
    <property type="entry name" value="Cytochrome P450"/>
    <property type="match status" value="1"/>
</dbReference>
<dbReference type="InterPro" id="IPR001128">
    <property type="entry name" value="Cyt_P450"/>
</dbReference>
<dbReference type="InterPro" id="IPR017972">
    <property type="entry name" value="Cyt_P450_CS"/>
</dbReference>
<dbReference type="InterPro" id="IPR002401">
    <property type="entry name" value="Cyt_P450_E_grp-I"/>
</dbReference>
<dbReference type="InterPro" id="IPR036396">
    <property type="entry name" value="Cyt_P450_sf"/>
</dbReference>
<dbReference type="InterPro" id="IPR050193">
    <property type="entry name" value="Cytochrome_P450_71"/>
</dbReference>
<dbReference type="PANTHER" id="PTHR47956">
    <property type="entry name" value="CYTOCHROME P450 71B11-RELATED"/>
    <property type="match status" value="1"/>
</dbReference>
<dbReference type="PANTHER" id="PTHR47956:SF119">
    <property type="entry name" value="CYTOCHROME P450 71B16-RELATED"/>
    <property type="match status" value="1"/>
</dbReference>
<dbReference type="Pfam" id="PF00067">
    <property type="entry name" value="p450"/>
    <property type="match status" value="1"/>
</dbReference>
<dbReference type="PRINTS" id="PR00463">
    <property type="entry name" value="EP450I"/>
</dbReference>
<dbReference type="PRINTS" id="PR00385">
    <property type="entry name" value="P450"/>
</dbReference>
<dbReference type="SUPFAM" id="SSF48264">
    <property type="entry name" value="Cytochrome P450"/>
    <property type="match status" value="1"/>
</dbReference>
<dbReference type="PROSITE" id="PS00086">
    <property type="entry name" value="CYTOCHROME_P450"/>
    <property type="match status" value="1"/>
</dbReference>
<organism>
    <name type="scientific">Arabidopsis thaliana</name>
    <name type="common">Mouse-ear cress</name>
    <dbReference type="NCBI Taxonomy" id="3702"/>
    <lineage>
        <taxon>Eukaryota</taxon>
        <taxon>Viridiplantae</taxon>
        <taxon>Streptophyta</taxon>
        <taxon>Embryophyta</taxon>
        <taxon>Tracheophyta</taxon>
        <taxon>Spermatophyta</taxon>
        <taxon>Magnoliopsida</taxon>
        <taxon>eudicotyledons</taxon>
        <taxon>Gunneridae</taxon>
        <taxon>Pentapetalae</taxon>
        <taxon>rosids</taxon>
        <taxon>malvids</taxon>
        <taxon>Brassicales</taxon>
        <taxon>Brassicaceae</taxon>
        <taxon>Camelineae</taxon>
        <taxon>Arabidopsis</taxon>
    </lineage>
</organism>
<protein>
    <recommendedName>
        <fullName>Cytochrome P450 71B17</fullName>
        <ecNumber>1.14.-.-</ecNumber>
    </recommendedName>
</protein>
<feature type="chain" id="PRO_0000052095" description="Cytochrome P450 71B17">
    <location>
        <begin position="1"/>
        <end position="502"/>
    </location>
</feature>
<feature type="transmembrane region" description="Helical" evidence="2">
    <location>
        <begin position="1"/>
        <end position="21"/>
    </location>
</feature>
<feature type="binding site" description="axial binding residue" evidence="1">
    <location>
        <position position="444"/>
    </location>
    <ligand>
        <name>heme</name>
        <dbReference type="ChEBI" id="CHEBI:30413"/>
    </ligand>
    <ligandPart>
        <name>Fe</name>
        <dbReference type="ChEBI" id="CHEBI:18248"/>
    </ligandPart>
</feature>
<gene>
    <name type="primary">CYP71B17</name>
    <name type="ordered locus">At3g26160</name>
    <name type="ORF">MTC11.6</name>
</gene>
<name>C71BH_ARATH</name>
<evidence type="ECO:0000250" key="1"/>
<evidence type="ECO:0000255" key="2"/>
<evidence type="ECO:0000305" key="3"/>
<keyword id="KW-0349">Heme</keyword>
<keyword id="KW-0408">Iron</keyword>
<keyword id="KW-0472">Membrane</keyword>
<keyword id="KW-0479">Metal-binding</keyword>
<keyword id="KW-0503">Monooxygenase</keyword>
<keyword id="KW-0560">Oxidoreductase</keyword>
<keyword id="KW-1185">Reference proteome</keyword>
<keyword id="KW-0812">Transmembrane</keyword>
<keyword id="KW-1133">Transmembrane helix</keyword>
<reference key="1">
    <citation type="journal article" date="2000" name="DNA Res.">
        <title>Structural analysis of Arabidopsis thaliana chromosome 3. I. Sequence features of the regions of 4,504,864 bp covered by sixty P1 and TAC clones.</title>
        <authorList>
            <person name="Sato S."/>
            <person name="Nakamura Y."/>
            <person name="Kaneko T."/>
            <person name="Katoh T."/>
            <person name="Asamizu E."/>
            <person name="Tabata S."/>
        </authorList>
    </citation>
    <scope>NUCLEOTIDE SEQUENCE [LARGE SCALE GENOMIC DNA]</scope>
    <source>
        <strain>cv. Columbia</strain>
    </source>
</reference>
<reference key="2">
    <citation type="journal article" date="2017" name="Plant J.">
        <title>Araport11: a complete reannotation of the Arabidopsis thaliana reference genome.</title>
        <authorList>
            <person name="Cheng C.Y."/>
            <person name="Krishnakumar V."/>
            <person name="Chan A.P."/>
            <person name="Thibaud-Nissen F."/>
            <person name="Schobel S."/>
            <person name="Town C.D."/>
        </authorList>
    </citation>
    <scope>GENOME REANNOTATION</scope>
    <source>
        <strain>cv. Columbia</strain>
    </source>
</reference>
<accession>Q9LTM6</accession>